<keyword id="KW-0479">Metal-binding</keyword>
<keyword id="KW-0539">Nucleus</keyword>
<keyword id="KW-1185">Reference proteome</keyword>
<keyword id="KW-0862">Zinc</keyword>
<keyword id="KW-0863">Zinc-finger</keyword>
<accession>Q8N8U3</accession>
<accession>B2RMZ0</accession>
<accession>Q5JQE9</accession>
<reference key="1">
    <citation type="journal article" date="2004" name="Nat. Genet.">
        <title>Complete sequencing and characterization of 21,243 full-length human cDNAs.</title>
        <authorList>
            <person name="Ota T."/>
            <person name="Suzuki Y."/>
            <person name="Nishikawa T."/>
            <person name="Otsuki T."/>
            <person name="Sugiyama T."/>
            <person name="Irie R."/>
            <person name="Wakamatsu A."/>
            <person name="Hayashi K."/>
            <person name="Sato H."/>
            <person name="Nagai K."/>
            <person name="Kimura K."/>
            <person name="Makita H."/>
            <person name="Sekine M."/>
            <person name="Obayashi M."/>
            <person name="Nishi T."/>
            <person name="Shibahara T."/>
            <person name="Tanaka T."/>
            <person name="Ishii S."/>
            <person name="Yamamoto J."/>
            <person name="Saito K."/>
            <person name="Kawai Y."/>
            <person name="Isono Y."/>
            <person name="Nakamura Y."/>
            <person name="Nagahari K."/>
            <person name="Murakami K."/>
            <person name="Yasuda T."/>
            <person name="Iwayanagi T."/>
            <person name="Wagatsuma M."/>
            <person name="Shiratori A."/>
            <person name="Sudo H."/>
            <person name="Hosoiri T."/>
            <person name="Kaku Y."/>
            <person name="Kodaira H."/>
            <person name="Kondo H."/>
            <person name="Sugawara M."/>
            <person name="Takahashi M."/>
            <person name="Kanda K."/>
            <person name="Yokoi T."/>
            <person name="Furuya T."/>
            <person name="Kikkawa E."/>
            <person name="Omura Y."/>
            <person name="Abe K."/>
            <person name="Kamihara K."/>
            <person name="Katsuta N."/>
            <person name="Sato K."/>
            <person name="Tanikawa M."/>
            <person name="Yamazaki M."/>
            <person name="Ninomiya K."/>
            <person name="Ishibashi T."/>
            <person name="Yamashita H."/>
            <person name="Murakawa K."/>
            <person name="Fujimori K."/>
            <person name="Tanai H."/>
            <person name="Kimata M."/>
            <person name="Watanabe M."/>
            <person name="Hiraoka S."/>
            <person name="Chiba Y."/>
            <person name="Ishida S."/>
            <person name="Ono Y."/>
            <person name="Takiguchi S."/>
            <person name="Watanabe S."/>
            <person name="Yosida M."/>
            <person name="Hotuta T."/>
            <person name="Kusano J."/>
            <person name="Kanehori K."/>
            <person name="Takahashi-Fujii A."/>
            <person name="Hara H."/>
            <person name="Tanase T.-O."/>
            <person name="Nomura Y."/>
            <person name="Togiya S."/>
            <person name="Komai F."/>
            <person name="Hara R."/>
            <person name="Takeuchi K."/>
            <person name="Arita M."/>
            <person name="Imose N."/>
            <person name="Musashino K."/>
            <person name="Yuuki H."/>
            <person name="Oshima A."/>
            <person name="Sasaki N."/>
            <person name="Aotsuka S."/>
            <person name="Yoshikawa Y."/>
            <person name="Matsunawa H."/>
            <person name="Ichihara T."/>
            <person name="Shiohata N."/>
            <person name="Sano S."/>
            <person name="Moriya S."/>
            <person name="Momiyama H."/>
            <person name="Satoh N."/>
            <person name="Takami S."/>
            <person name="Terashima Y."/>
            <person name="Suzuki O."/>
            <person name="Nakagawa S."/>
            <person name="Senoh A."/>
            <person name="Mizoguchi H."/>
            <person name="Goto Y."/>
            <person name="Shimizu F."/>
            <person name="Wakebe H."/>
            <person name="Hishigaki H."/>
            <person name="Watanabe T."/>
            <person name="Sugiyama A."/>
            <person name="Takemoto M."/>
            <person name="Kawakami B."/>
            <person name="Yamazaki M."/>
            <person name="Watanabe K."/>
            <person name="Kumagai A."/>
            <person name="Itakura S."/>
            <person name="Fukuzumi Y."/>
            <person name="Fujimori Y."/>
            <person name="Komiyama M."/>
            <person name="Tashiro H."/>
            <person name="Tanigami A."/>
            <person name="Fujiwara T."/>
            <person name="Ono T."/>
            <person name="Yamada K."/>
            <person name="Fujii Y."/>
            <person name="Ozaki K."/>
            <person name="Hirao M."/>
            <person name="Ohmori Y."/>
            <person name="Kawabata A."/>
            <person name="Hikiji T."/>
            <person name="Kobatake N."/>
            <person name="Inagaki H."/>
            <person name="Ikema Y."/>
            <person name="Okamoto S."/>
            <person name="Okitani R."/>
            <person name="Kawakami T."/>
            <person name="Noguchi S."/>
            <person name="Itoh T."/>
            <person name="Shigeta K."/>
            <person name="Senba T."/>
            <person name="Matsumura K."/>
            <person name="Nakajima Y."/>
            <person name="Mizuno T."/>
            <person name="Morinaga M."/>
            <person name="Sasaki M."/>
            <person name="Togashi T."/>
            <person name="Oyama M."/>
            <person name="Hata H."/>
            <person name="Watanabe M."/>
            <person name="Komatsu T."/>
            <person name="Mizushima-Sugano J."/>
            <person name="Satoh T."/>
            <person name="Shirai Y."/>
            <person name="Takahashi Y."/>
            <person name="Nakagawa K."/>
            <person name="Okumura K."/>
            <person name="Nagase T."/>
            <person name="Nomura N."/>
            <person name="Kikuchi H."/>
            <person name="Masuho Y."/>
            <person name="Yamashita R."/>
            <person name="Nakai K."/>
            <person name="Yada T."/>
            <person name="Nakamura Y."/>
            <person name="Ohara O."/>
            <person name="Isogai T."/>
            <person name="Sugano S."/>
        </authorList>
    </citation>
    <scope>NUCLEOTIDE SEQUENCE [LARGE SCALE MRNA]</scope>
</reference>
<reference key="2">
    <citation type="journal article" date="2005" name="Nature">
        <title>The DNA sequence of the human X chromosome.</title>
        <authorList>
            <person name="Ross M.T."/>
            <person name="Grafham D.V."/>
            <person name="Coffey A.J."/>
            <person name="Scherer S."/>
            <person name="McLay K."/>
            <person name="Muzny D."/>
            <person name="Platzer M."/>
            <person name="Howell G.R."/>
            <person name="Burrows C."/>
            <person name="Bird C.P."/>
            <person name="Frankish A."/>
            <person name="Lovell F.L."/>
            <person name="Howe K.L."/>
            <person name="Ashurst J.L."/>
            <person name="Fulton R.S."/>
            <person name="Sudbrak R."/>
            <person name="Wen G."/>
            <person name="Jones M.C."/>
            <person name="Hurles M.E."/>
            <person name="Andrews T.D."/>
            <person name="Scott C.E."/>
            <person name="Searle S."/>
            <person name="Ramser J."/>
            <person name="Whittaker A."/>
            <person name="Deadman R."/>
            <person name="Carter N.P."/>
            <person name="Hunt S.E."/>
            <person name="Chen R."/>
            <person name="Cree A."/>
            <person name="Gunaratne P."/>
            <person name="Havlak P."/>
            <person name="Hodgson A."/>
            <person name="Metzker M.L."/>
            <person name="Richards S."/>
            <person name="Scott G."/>
            <person name="Steffen D."/>
            <person name="Sodergren E."/>
            <person name="Wheeler D.A."/>
            <person name="Worley K.C."/>
            <person name="Ainscough R."/>
            <person name="Ambrose K.D."/>
            <person name="Ansari-Lari M.A."/>
            <person name="Aradhya S."/>
            <person name="Ashwell R.I."/>
            <person name="Babbage A.K."/>
            <person name="Bagguley C.L."/>
            <person name="Ballabio A."/>
            <person name="Banerjee R."/>
            <person name="Barker G.E."/>
            <person name="Barlow K.F."/>
            <person name="Barrett I.P."/>
            <person name="Bates K.N."/>
            <person name="Beare D.M."/>
            <person name="Beasley H."/>
            <person name="Beasley O."/>
            <person name="Beck A."/>
            <person name="Bethel G."/>
            <person name="Blechschmidt K."/>
            <person name="Brady N."/>
            <person name="Bray-Allen S."/>
            <person name="Bridgeman A.M."/>
            <person name="Brown A.J."/>
            <person name="Brown M.J."/>
            <person name="Bonnin D."/>
            <person name="Bruford E.A."/>
            <person name="Buhay C."/>
            <person name="Burch P."/>
            <person name="Burford D."/>
            <person name="Burgess J."/>
            <person name="Burrill W."/>
            <person name="Burton J."/>
            <person name="Bye J.M."/>
            <person name="Carder C."/>
            <person name="Carrel L."/>
            <person name="Chako J."/>
            <person name="Chapman J.C."/>
            <person name="Chavez D."/>
            <person name="Chen E."/>
            <person name="Chen G."/>
            <person name="Chen Y."/>
            <person name="Chen Z."/>
            <person name="Chinault C."/>
            <person name="Ciccodicola A."/>
            <person name="Clark S.Y."/>
            <person name="Clarke G."/>
            <person name="Clee C.M."/>
            <person name="Clegg S."/>
            <person name="Clerc-Blankenburg K."/>
            <person name="Clifford K."/>
            <person name="Cobley V."/>
            <person name="Cole C.G."/>
            <person name="Conquer J.S."/>
            <person name="Corby N."/>
            <person name="Connor R.E."/>
            <person name="David R."/>
            <person name="Davies J."/>
            <person name="Davis C."/>
            <person name="Davis J."/>
            <person name="Delgado O."/>
            <person name="Deshazo D."/>
            <person name="Dhami P."/>
            <person name="Ding Y."/>
            <person name="Dinh H."/>
            <person name="Dodsworth S."/>
            <person name="Draper H."/>
            <person name="Dugan-Rocha S."/>
            <person name="Dunham A."/>
            <person name="Dunn M."/>
            <person name="Durbin K.J."/>
            <person name="Dutta I."/>
            <person name="Eades T."/>
            <person name="Ellwood M."/>
            <person name="Emery-Cohen A."/>
            <person name="Errington H."/>
            <person name="Evans K.L."/>
            <person name="Faulkner L."/>
            <person name="Francis F."/>
            <person name="Frankland J."/>
            <person name="Fraser A.E."/>
            <person name="Galgoczy P."/>
            <person name="Gilbert J."/>
            <person name="Gill R."/>
            <person name="Gloeckner G."/>
            <person name="Gregory S.G."/>
            <person name="Gribble S."/>
            <person name="Griffiths C."/>
            <person name="Grocock R."/>
            <person name="Gu Y."/>
            <person name="Gwilliam R."/>
            <person name="Hamilton C."/>
            <person name="Hart E.A."/>
            <person name="Hawes A."/>
            <person name="Heath P.D."/>
            <person name="Heitmann K."/>
            <person name="Hennig S."/>
            <person name="Hernandez J."/>
            <person name="Hinzmann B."/>
            <person name="Ho S."/>
            <person name="Hoffs M."/>
            <person name="Howden P.J."/>
            <person name="Huckle E.J."/>
            <person name="Hume J."/>
            <person name="Hunt P.J."/>
            <person name="Hunt A.R."/>
            <person name="Isherwood J."/>
            <person name="Jacob L."/>
            <person name="Johnson D."/>
            <person name="Jones S."/>
            <person name="de Jong P.J."/>
            <person name="Joseph S.S."/>
            <person name="Keenan S."/>
            <person name="Kelly S."/>
            <person name="Kershaw J.K."/>
            <person name="Khan Z."/>
            <person name="Kioschis P."/>
            <person name="Klages S."/>
            <person name="Knights A.J."/>
            <person name="Kosiura A."/>
            <person name="Kovar-Smith C."/>
            <person name="Laird G.K."/>
            <person name="Langford C."/>
            <person name="Lawlor S."/>
            <person name="Leversha M."/>
            <person name="Lewis L."/>
            <person name="Liu W."/>
            <person name="Lloyd C."/>
            <person name="Lloyd D.M."/>
            <person name="Loulseged H."/>
            <person name="Loveland J.E."/>
            <person name="Lovell J.D."/>
            <person name="Lozado R."/>
            <person name="Lu J."/>
            <person name="Lyne R."/>
            <person name="Ma J."/>
            <person name="Maheshwari M."/>
            <person name="Matthews L.H."/>
            <person name="McDowall J."/>
            <person name="McLaren S."/>
            <person name="McMurray A."/>
            <person name="Meidl P."/>
            <person name="Meitinger T."/>
            <person name="Milne S."/>
            <person name="Miner G."/>
            <person name="Mistry S.L."/>
            <person name="Morgan M."/>
            <person name="Morris S."/>
            <person name="Mueller I."/>
            <person name="Mullikin J.C."/>
            <person name="Nguyen N."/>
            <person name="Nordsiek G."/>
            <person name="Nyakatura G."/>
            <person name="O'dell C.N."/>
            <person name="Okwuonu G."/>
            <person name="Palmer S."/>
            <person name="Pandian R."/>
            <person name="Parker D."/>
            <person name="Parrish J."/>
            <person name="Pasternak S."/>
            <person name="Patel D."/>
            <person name="Pearce A.V."/>
            <person name="Pearson D.M."/>
            <person name="Pelan S.E."/>
            <person name="Perez L."/>
            <person name="Porter K.M."/>
            <person name="Ramsey Y."/>
            <person name="Reichwald K."/>
            <person name="Rhodes S."/>
            <person name="Ridler K.A."/>
            <person name="Schlessinger D."/>
            <person name="Schueler M.G."/>
            <person name="Sehra H.K."/>
            <person name="Shaw-Smith C."/>
            <person name="Shen H."/>
            <person name="Sheridan E.M."/>
            <person name="Shownkeen R."/>
            <person name="Skuce C.D."/>
            <person name="Smith M.L."/>
            <person name="Sotheran E.C."/>
            <person name="Steingruber H.E."/>
            <person name="Steward C.A."/>
            <person name="Storey R."/>
            <person name="Swann R.M."/>
            <person name="Swarbreck D."/>
            <person name="Tabor P.E."/>
            <person name="Taudien S."/>
            <person name="Taylor T."/>
            <person name="Teague B."/>
            <person name="Thomas K."/>
            <person name="Thorpe A."/>
            <person name="Timms K."/>
            <person name="Tracey A."/>
            <person name="Trevanion S."/>
            <person name="Tromans A.C."/>
            <person name="d'Urso M."/>
            <person name="Verduzco D."/>
            <person name="Villasana D."/>
            <person name="Waldron L."/>
            <person name="Wall M."/>
            <person name="Wang Q."/>
            <person name="Warren J."/>
            <person name="Warry G.L."/>
            <person name="Wei X."/>
            <person name="West A."/>
            <person name="Whitehead S.L."/>
            <person name="Whiteley M.N."/>
            <person name="Wilkinson J.E."/>
            <person name="Willey D.L."/>
            <person name="Williams G."/>
            <person name="Williams L."/>
            <person name="Williamson A."/>
            <person name="Williamson H."/>
            <person name="Wilming L."/>
            <person name="Woodmansey R.L."/>
            <person name="Wray P.W."/>
            <person name="Yen J."/>
            <person name="Zhang J."/>
            <person name="Zhou J."/>
            <person name="Zoghbi H."/>
            <person name="Zorilla S."/>
            <person name="Buck D."/>
            <person name="Reinhardt R."/>
            <person name="Poustka A."/>
            <person name="Rosenthal A."/>
            <person name="Lehrach H."/>
            <person name="Meindl A."/>
            <person name="Minx P.J."/>
            <person name="Hillier L.W."/>
            <person name="Willard H.F."/>
            <person name="Wilson R.K."/>
            <person name="Waterston R.H."/>
            <person name="Rice C.M."/>
            <person name="Vaudin M."/>
            <person name="Coulson A."/>
            <person name="Nelson D.L."/>
            <person name="Weinstock G."/>
            <person name="Sulston J.E."/>
            <person name="Durbin R.M."/>
            <person name="Hubbard T."/>
            <person name="Gibbs R.A."/>
            <person name="Beck S."/>
            <person name="Rogers J."/>
            <person name="Bentley D.R."/>
        </authorList>
    </citation>
    <scope>NUCLEOTIDE SEQUENCE [LARGE SCALE GENOMIC DNA]</scope>
</reference>
<reference key="3">
    <citation type="journal article" date="2004" name="Genome Res.">
        <title>The status, quality, and expansion of the NIH full-length cDNA project: the Mammalian Gene Collection (MGC).</title>
        <authorList>
            <consortium name="The MGC Project Team"/>
        </authorList>
    </citation>
    <scope>NUCLEOTIDE SEQUENCE [LARGE SCALE MRNA]</scope>
    <scope>VARIANT SER-117</scope>
</reference>
<reference key="4">
    <citation type="journal article" date="2005" name="Cytogenet. Genome Res.">
        <title>A family of neofunctionalized Ty3/gypsy retrotransposon genes in mammalian genomes.</title>
        <authorList>
            <person name="Brandt J."/>
            <person name="Veith A.-M."/>
            <person name="Volff J.-N."/>
        </authorList>
    </citation>
    <scope>GENE FAMILY</scope>
</reference>
<organism>
    <name type="scientific">Homo sapiens</name>
    <name type="common">Human</name>
    <dbReference type="NCBI Taxonomy" id="9606"/>
    <lineage>
        <taxon>Eukaryota</taxon>
        <taxon>Metazoa</taxon>
        <taxon>Chordata</taxon>
        <taxon>Craniata</taxon>
        <taxon>Vertebrata</taxon>
        <taxon>Euteleostomi</taxon>
        <taxon>Mammalia</taxon>
        <taxon>Eutheria</taxon>
        <taxon>Euarchontoglires</taxon>
        <taxon>Primates</taxon>
        <taxon>Haplorrhini</taxon>
        <taxon>Catarrhini</taxon>
        <taxon>Hominidae</taxon>
        <taxon>Homo</taxon>
    </lineage>
</organism>
<comment type="function">
    <text evidence="1">May function as a transcriptional regulator. Plays a role in postnatal myogenesis, may be involved in the regulation of satellite cells self-renewal.</text>
</comment>
<comment type="subcellular location">
    <subcellularLocation>
        <location evidence="1">Nucleus</location>
    </subcellularLocation>
</comment>
<comment type="miscellaneous">
    <text evidence="5">RTL3 is one of at least 11 genes called Mar or Mart related to long terminal repeat retrotransposons. They do not correspond to functional retrotransposons, but rather to neofunctionalized retrotransposons genes.</text>
</comment>
<dbReference type="EMBL" id="AK096184">
    <property type="protein sequence ID" value="BAC04719.1"/>
    <property type="molecule type" value="mRNA"/>
</dbReference>
<dbReference type="EMBL" id="AL662885">
    <property type="status" value="NOT_ANNOTATED_CDS"/>
    <property type="molecule type" value="Genomic_DNA"/>
</dbReference>
<dbReference type="EMBL" id="BC136548">
    <property type="protein sequence ID" value="AAI36549.1"/>
    <property type="molecule type" value="mRNA"/>
</dbReference>
<dbReference type="EMBL" id="BC136549">
    <property type="protein sequence ID" value="AAI36550.1"/>
    <property type="molecule type" value="mRNA"/>
</dbReference>
<dbReference type="CCDS" id="CCDS14440.1"/>
<dbReference type="RefSeq" id="NP_689907.1">
    <property type="nucleotide sequence ID" value="NM_152694.3"/>
</dbReference>
<dbReference type="SMR" id="Q8N8U3"/>
<dbReference type="STRING" id="9606.ENSP00000316794"/>
<dbReference type="PhosphoSitePlus" id="Q8N8U3"/>
<dbReference type="BioMuta" id="RTL3"/>
<dbReference type="DMDM" id="34223121"/>
<dbReference type="PaxDb" id="9606-ENSP00000316794"/>
<dbReference type="PeptideAtlas" id="Q8N8U3"/>
<dbReference type="ProteomicsDB" id="72460"/>
<dbReference type="Antibodypedia" id="56109">
    <property type="antibodies" value="69 antibodies from 14 providers"/>
</dbReference>
<dbReference type="DNASU" id="203430"/>
<dbReference type="Ensembl" id="ENST00000321110.2">
    <property type="protein sequence ID" value="ENSP00000316794.1"/>
    <property type="gene ID" value="ENSG00000179300.4"/>
</dbReference>
<dbReference type="GeneID" id="203430"/>
<dbReference type="KEGG" id="hsa:203430"/>
<dbReference type="MANE-Select" id="ENST00000321110.2">
    <property type="protein sequence ID" value="ENSP00000316794.1"/>
    <property type="RefSeq nucleotide sequence ID" value="NM_152694.3"/>
    <property type="RefSeq protein sequence ID" value="NP_689907.1"/>
</dbReference>
<dbReference type="UCSC" id="uc004edc.1">
    <property type="organism name" value="human"/>
</dbReference>
<dbReference type="AGR" id="HGNC:22997"/>
<dbReference type="CTD" id="203430"/>
<dbReference type="DisGeNET" id="203430"/>
<dbReference type="GeneCards" id="RTL3"/>
<dbReference type="HGNC" id="HGNC:22997">
    <property type="gene designation" value="RTL3"/>
</dbReference>
<dbReference type="HPA" id="ENSG00000179300">
    <property type="expression patterns" value="Not detected"/>
</dbReference>
<dbReference type="MIM" id="301130">
    <property type="type" value="gene"/>
</dbReference>
<dbReference type="neXtProt" id="NX_Q8N8U3"/>
<dbReference type="OpenTargets" id="ENSG00000179300"/>
<dbReference type="PharmGKB" id="PA134958360"/>
<dbReference type="VEuPathDB" id="HostDB:ENSG00000179300"/>
<dbReference type="eggNOG" id="ENOG502S3G3">
    <property type="taxonomic scope" value="Eukaryota"/>
</dbReference>
<dbReference type="GeneTree" id="ENSGT00940000163808"/>
<dbReference type="HOGENOM" id="CLU_045127_0_0_1"/>
<dbReference type="InParanoid" id="Q8N8U3"/>
<dbReference type="OMA" id="HQYATHF"/>
<dbReference type="OrthoDB" id="9600801at2759"/>
<dbReference type="PAN-GO" id="Q8N8U3">
    <property type="GO annotations" value="0 GO annotations based on evolutionary models"/>
</dbReference>
<dbReference type="PhylomeDB" id="Q8N8U3"/>
<dbReference type="TreeFam" id="TF335133"/>
<dbReference type="PathwayCommons" id="Q8N8U3"/>
<dbReference type="BioGRID-ORCS" id="203430">
    <property type="hits" value="10 hits in 760 CRISPR screens"/>
</dbReference>
<dbReference type="GenomeRNAi" id="203430"/>
<dbReference type="Pharos" id="Q8N8U3">
    <property type="development level" value="Tdark"/>
</dbReference>
<dbReference type="PRO" id="PR:Q8N8U3"/>
<dbReference type="Proteomes" id="UP000005640">
    <property type="component" value="Chromosome X"/>
</dbReference>
<dbReference type="RNAct" id="Q8N8U3">
    <property type="molecule type" value="protein"/>
</dbReference>
<dbReference type="Bgee" id="ENSG00000179300">
    <property type="expression patterns" value="Expressed in mucosa of stomach and 52 other cell types or tissues"/>
</dbReference>
<dbReference type="GO" id="GO:0005634">
    <property type="term" value="C:nucleus"/>
    <property type="evidence" value="ECO:0007669"/>
    <property type="project" value="UniProtKB-SubCell"/>
</dbReference>
<dbReference type="GO" id="GO:0003676">
    <property type="term" value="F:nucleic acid binding"/>
    <property type="evidence" value="ECO:0007669"/>
    <property type="project" value="InterPro"/>
</dbReference>
<dbReference type="GO" id="GO:0008270">
    <property type="term" value="F:zinc ion binding"/>
    <property type="evidence" value="ECO:0007669"/>
    <property type="project" value="UniProtKB-KW"/>
</dbReference>
<dbReference type="Gene3D" id="4.10.60.10">
    <property type="entry name" value="Zinc finger, CCHC-type"/>
    <property type="match status" value="1"/>
</dbReference>
<dbReference type="InterPro" id="IPR032549">
    <property type="entry name" value="DUF4939"/>
</dbReference>
<dbReference type="InterPro" id="IPR032567">
    <property type="entry name" value="RTL1-rel"/>
</dbReference>
<dbReference type="InterPro" id="IPR001878">
    <property type="entry name" value="Znf_CCHC"/>
</dbReference>
<dbReference type="InterPro" id="IPR036875">
    <property type="entry name" value="Znf_CCHC_sf"/>
</dbReference>
<dbReference type="PANTHER" id="PTHR15503">
    <property type="entry name" value="LDOC1 RELATED"/>
    <property type="match status" value="1"/>
</dbReference>
<dbReference type="PANTHER" id="PTHR15503:SF7">
    <property type="entry name" value="RETROTRANSPOSON GAG-LIKE PROTEIN 3"/>
    <property type="match status" value="1"/>
</dbReference>
<dbReference type="Pfam" id="PF16297">
    <property type="entry name" value="DUF4939"/>
    <property type="match status" value="1"/>
</dbReference>
<dbReference type="Pfam" id="PF00098">
    <property type="entry name" value="zf-CCHC"/>
    <property type="match status" value="1"/>
</dbReference>
<dbReference type="SMART" id="SM00343">
    <property type="entry name" value="ZnF_C2HC"/>
    <property type="match status" value="1"/>
</dbReference>
<dbReference type="SUPFAM" id="SSF57756">
    <property type="entry name" value="Retrovirus zinc finger-like domains"/>
    <property type="match status" value="1"/>
</dbReference>
<dbReference type="PROSITE" id="PS50158">
    <property type="entry name" value="ZF_CCHC"/>
    <property type="match status" value="1"/>
</dbReference>
<gene>
    <name evidence="8" type="primary">RTL3</name>
    <name evidence="6" type="synonym">MAR3</name>
    <name evidence="6" type="synonym">MART3</name>
    <name evidence="8" type="synonym">ZCCHC5</name>
</gene>
<name>RTL3_HUMAN</name>
<proteinExistence type="evidence at transcript level"/>
<evidence type="ECO:0000250" key="1">
    <source>
        <dbReference type="UniProtKB" id="Q6P1Y1"/>
    </source>
</evidence>
<evidence type="ECO:0000255" key="2">
    <source>
        <dbReference type="PROSITE-ProRule" id="PRU00047"/>
    </source>
</evidence>
<evidence type="ECO:0000256" key="3">
    <source>
        <dbReference type="SAM" id="MobiDB-lite"/>
    </source>
</evidence>
<evidence type="ECO:0000269" key="4">
    <source>
    </source>
</evidence>
<evidence type="ECO:0000269" key="5">
    <source>
    </source>
</evidence>
<evidence type="ECO:0000303" key="6">
    <source>
    </source>
</evidence>
<evidence type="ECO:0000305" key="7"/>
<evidence type="ECO:0000312" key="8">
    <source>
        <dbReference type="HGNC" id="HGNC:22997"/>
    </source>
</evidence>
<feature type="chain" id="PRO_0000150956" description="Retrotransposon Gag-like protein 3">
    <location>
        <begin position="1"/>
        <end position="475"/>
    </location>
</feature>
<feature type="zinc finger region" description="CCHC-type" evidence="2">
    <location>
        <begin position="443"/>
        <end position="462"/>
    </location>
</feature>
<feature type="region of interest" description="Disordered" evidence="3">
    <location>
        <begin position="51"/>
        <end position="101"/>
    </location>
</feature>
<feature type="region of interest" description="Disordered" evidence="3">
    <location>
        <begin position="152"/>
        <end position="173"/>
    </location>
</feature>
<feature type="region of interest" description="Disordered" evidence="3">
    <location>
        <begin position="397"/>
        <end position="421"/>
    </location>
</feature>
<feature type="compositionally biased region" description="Basic and acidic residues" evidence="3">
    <location>
        <begin position="51"/>
        <end position="66"/>
    </location>
</feature>
<feature type="compositionally biased region" description="Basic and acidic residues" evidence="3">
    <location>
        <begin position="78"/>
        <end position="87"/>
    </location>
</feature>
<feature type="sequence variant" id="VAR_053752" description="In dbSNP:rs4077512." evidence="4">
    <original>P</original>
    <variation>S</variation>
    <location>
        <position position="117"/>
    </location>
</feature>
<protein>
    <recommendedName>
        <fullName evidence="8">Retrotransposon Gag-like protein 3</fullName>
    </recommendedName>
    <alternativeName>
        <fullName evidence="7">Zinc finger CCHC domain-containing protein 5</fullName>
    </alternativeName>
</protein>
<sequence>MVEDLAASYIVLKLENEIRQAQVQWLMEENAALQAQIPELQKSQAAKEYDLLRKSSEAKEPQKLPEHMNPPAAWEAQKTPEFKEPQKPPEPQDLLPWEPPAAWELQEAPAAPESLAPPATRESQKPPMAHEIPTVLEGQGPANTQDATIAQEPKNSEPQDPPNIEKPQEAPEYQETAAQLEFLELPPPQEPLEPSNAQEFLELSAAQESLEGLIVVETSAASEFPQAPIGLEATDFPLQYTLTFSGDSQKLPEFLVQLYSYMRVRGHLYPTEAALVSFVGNCFSGRAGWWFQLLLDIQSPLLEQCESFIPVLQDTFDNPENMKDANQCIHQLCQGEGHVATHFHLIAQELNWDESTLWIQFQEGLASSIQDELSHTSPATNLSDLITQCISLEEKPDPNPLGKSSSAEGDGPESPPAENQPMQAAINCPHISEAEWVRWHKGRLCLYCGYPGHFARDCPVKPHQALQAGNIQACQ</sequence>